<comment type="function">
    <text evidence="1">Member of the two-component regulatory system LytR/LytS that probably regulates genes involved in cell wall metabolism.</text>
</comment>
<comment type="subcellular location">
    <subcellularLocation>
        <location evidence="1">Cytoplasm</location>
    </subcellularLocation>
</comment>
<comment type="PTM">
    <text evidence="1">Phosphorylated by LytS.</text>
</comment>
<proteinExistence type="inferred from homology"/>
<dbReference type="EMBL" id="AP006716">
    <property type="protein sequence ID" value="BAE03921.1"/>
    <property type="molecule type" value="Genomic_DNA"/>
</dbReference>
<dbReference type="RefSeq" id="WP_011274937.1">
    <property type="nucleotide sequence ID" value="NC_007168.1"/>
</dbReference>
<dbReference type="SMR" id="Q4L8V4"/>
<dbReference type="KEGG" id="sha:SH0612"/>
<dbReference type="eggNOG" id="COG3279">
    <property type="taxonomic scope" value="Bacteria"/>
</dbReference>
<dbReference type="HOGENOM" id="CLU_000445_14_1_9"/>
<dbReference type="OrthoDB" id="9809318at2"/>
<dbReference type="Proteomes" id="UP000000543">
    <property type="component" value="Chromosome"/>
</dbReference>
<dbReference type="GO" id="GO:0005737">
    <property type="term" value="C:cytoplasm"/>
    <property type="evidence" value="ECO:0007669"/>
    <property type="project" value="UniProtKB-SubCell"/>
</dbReference>
<dbReference type="GO" id="GO:0003677">
    <property type="term" value="F:DNA binding"/>
    <property type="evidence" value="ECO:0007669"/>
    <property type="project" value="UniProtKB-KW"/>
</dbReference>
<dbReference type="GO" id="GO:0000156">
    <property type="term" value="F:phosphorelay response regulator activity"/>
    <property type="evidence" value="ECO:0007669"/>
    <property type="project" value="InterPro"/>
</dbReference>
<dbReference type="CDD" id="cd17532">
    <property type="entry name" value="REC_LytTR_AlgR-like"/>
    <property type="match status" value="1"/>
</dbReference>
<dbReference type="FunFam" id="3.40.50.2300:FF:000134">
    <property type="entry name" value="Autolysin response regulator LytR"/>
    <property type="match status" value="1"/>
</dbReference>
<dbReference type="Gene3D" id="3.40.50.2300">
    <property type="match status" value="1"/>
</dbReference>
<dbReference type="Gene3D" id="2.40.50.1020">
    <property type="entry name" value="LytTr DNA-binding domain"/>
    <property type="match status" value="1"/>
</dbReference>
<dbReference type="InterPro" id="IPR011006">
    <property type="entry name" value="CheY-like_superfamily"/>
</dbReference>
<dbReference type="InterPro" id="IPR046947">
    <property type="entry name" value="LytR-like"/>
</dbReference>
<dbReference type="InterPro" id="IPR007492">
    <property type="entry name" value="LytTR_DNA-bd_dom"/>
</dbReference>
<dbReference type="InterPro" id="IPR001789">
    <property type="entry name" value="Sig_transdc_resp-reg_receiver"/>
</dbReference>
<dbReference type="NCBIfam" id="NF010684">
    <property type="entry name" value="PRK14084.1"/>
    <property type="match status" value="1"/>
</dbReference>
<dbReference type="PANTHER" id="PTHR37299:SF1">
    <property type="entry name" value="STAGE 0 SPORULATION PROTEIN A HOMOLOG"/>
    <property type="match status" value="1"/>
</dbReference>
<dbReference type="PANTHER" id="PTHR37299">
    <property type="entry name" value="TRANSCRIPTIONAL REGULATOR-RELATED"/>
    <property type="match status" value="1"/>
</dbReference>
<dbReference type="Pfam" id="PF04397">
    <property type="entry name" value="LytTR"/>
    <property type="match status" value="1"/>
</dbReference>
<dbReference type="Pfam" id="PF00072">
    <property type="entry name" value="Response_reg"/>
    <property type="match status" value="1"/>
</dbReference>
<dbReference type="SMART" id="SM00850">
    <property type="entry name" value="LytTR"/>
    <property type="match status" value="1"/>
</dbReference>
<dbReference type="SMART" id="SM00448">
    <property type="entry name" value="REC"/>
    <property type="match status" value="1"/>
</dbReference>
<dbReference type="SUPFAM" id="SSF52172">
    <property type="entry name" value="CheY-like"/>
    <property type="match status" value="1"/>
</dbReference>
<dbReference type="PROSITE" id="PS50930">
    <property type="entry name" value="HTH_LYTTR"/>
    <property type="match status" value="1"/>
</dbReference>
<dbReference type="PROSITE" id="PS50110">
    <property type="entry name" value="RESPONSE_REGULATORY"/>
    <property type="match status" value="1"/>
</dbReference>
<name>LYTR_STAHJ</name>
<feature type="chain" id="PRO_0000291854" description="Sensory transduction protein LytR">
    <location>
        <begin position="1"/>
        <end position="256"/>
    </location>
</feature>
<feature type="domain" description="Response regulatory" evidence="3">
    <location>
        <begin position="2"/>
        <end position="116"/>
    </location>
</feature>
<feature type="domain" description="HTH LytTR-type" evidence="2">
    <location>
        <begin position="151"/>
        <end position="255"/>
    </location>
</feature>
<feature type="region of interest" description="Disordered" evidence="4">
    <location>
        <begin position="124"/>
        <end position="146"/>
    </location>
</feature>
<feature type="modified residue" description="4-aspartylphosphate" evidence="3">
    <location>
        <position position="53"/>
    </location>
</feature>
<gene>
    <name type="primary">lytR</name>
    <name type="ordered locus">SH0612</name>
</gene>
<evidence type="ECO:0000250" key="1"/>
<evidence type="ECO:0000255" key="2">
    <source>
        <dbReference type="PROSITE-ProRule" id="PRU00112"/>
    </source>
</evidence>
<evidence type="ECO:0000255" key="3">
    <source>
        <dbReference type="PROSITE-ProRule" id="PRU00169"/>
    </source>
</evidence>
<evidence type="ECO:0000256" key="4">
    <source>
        <dbReference type="SAM" id="MobiDB-lite"/>
    </source>
</evidence>
<accession>Q4L8V4</accession>
<reference key="1">
    <citation type="journal article" date="2005" name="J. Bacteriol.">
        <title>Whole-genome sequencing of Staphylococcus haemolyticus uncovers the extreme plasticity of its genome and the evolution of human-colonizing staphylococcal species.</title>
        <authorList>
            <person name="Takeuchi F."/>
            <person name="Watanabe S."/>
            <person name="Baba T."/>
            <person name="Yuzawa H."/>
            <person name="Ito T."/>
            <person name="Morimoto Y."/>
            <person name="Kuroda M."/>
            <person name="Cui L."/>
            <person name="Takahashi M."/>
            <person name="Ankai A."/>
            <person name="Baba S."/>
            <person name="Fukui S."/>
            <person name="Lee J.C."/>
            <person name="Hiramatsu K."/>
        </authorList>
    </citation>
    <scope>NUCLEOTIDE SEQUENCE [LARGE SCALE GENOMIC DNA]</scope>
    <source>
        <strain>JCSC1435</strain>
    </source>
</reference>
<sequence length="256" mass="29725">MKTLIVDDEPLARNELHYLLNEISGFNVIDEAENIEETLEKLLSETYDLVFLDINLMDESGIDLAQKIKKMKQPPHIIFATAHDTFAVKAFELDAIDYILKPFELERIEQAVNKVKHQISNSNEIDHITSEPSTLSMQQDDRQENEDQTVLPIEMNERIYVIRKDDITAVSVNNGITTINTTHRTYQTNEPLNYYEKKLSNNTFIKIHRATIINKTHIDSVEHWFNYTYQVTMTSGDKFQVSRSFMKAFKHEIGLA</sequence>
<keyword id="KW-0963">Cytoplasm</keyword>
<keyword id="KW-0238">DNA-binding</keyword>
<keyword id="KW-0597">Phosphoprotein</keyword>
<keyword id="KW-0804">Transcription</keyword>
<keyword id="KW-0805">Transcription regulation</keyword>
<keyword id="KW-0902">Two-component regulatory system</keyword>
<organism>
    <name type="scientific">Staphylococcus haemolyticus (strain JCSC1435)</name>
    <dbReference type="NCBI Taxonomy" id="279808"/>
    <lineage>
        <taxon>Bacteria</taxon>
        <taxon>Bacillati</taxon>
        <taxon>Bacillota</taxon>
        <taxon>Bacilli</taxon>
        <taxon>Bacillales</taxon>
        <taxon>Staphylococcaceae</taxon>
        <taxon>Staphylococcus</taxon>
    </lineage>
</organism>
<protein>
    <recommendedName>
        <fullName>Sensory transduction protein LytR</fullName>
    </recommendedName>
</protein>